<feature type="signal peptide" evidence="1">
    <location>
        <begin position="1"/>
        <end position="24"/>
    </location>
</feature>
<feature type="chain" id="PRO_5000099874" description="Outer-membrane lipoprotein carrier protein">
    <location>
        <begin position="25"/>
        <end position="208"/>
    </location>
</feature>
<sequence length="208" mass="22502">MRMNIVQKILSATCFALLPLLAHAGAVDQLHDFLKNTRTLKAEFSQAVISRNGRKPQQSSGTIAISRPGKLRWEIVKPFPQLVVGDGEKIWIHDPELQQVTVRKAGQAIGSSPAALLSGNNDLEKNFTLKDAGEAEGMAWVDATPKAGDSGFEKVRLGFSGGDLRAMELFDSFGQTTQIRFSKIERNPALPAATFKFTPPAGADVVGE</sequence>
<proteinExistence type="inferred from homology"/>
<evidence type="ECO:0000255" key="1">
    <source>
        <dbReference type="HAMAP-Rule" id="MF_00240"/>
    </source>
</evidence>
<gene>
    <name evidence="1" type="primary">lolA</name>
    <name type="ordered locus">Daro_1296</name>
</gene>
<keyword id="KW-0143">Chaperone</keyword>
<keyword id="KW-0574">Periplasm</keyword>
<keyword id="KW-0653">Protein transport</keyword>
<keyword id="KW-0732">Signal</keyword>
<keyword id="KW-0813">Transport</keyword>
<dbReference type="EMBL" id="CP000089">
    <property type="protein sequence ID" value="AAZ46048.1"/>
    <property type="molecule type" value="Genomic_DNA"/>
</dbReference>
<dbReference type="SMR" id="Q47GI3"/>
<dbReference type="STRING" id="159087.Daro_1296"/>
<dbReference type="KEGG" id="dar:Daro_1296"/>
<dbReference type="eggNOG" id="COG2834">
    <property type="taxonomic scope" value="Bacteria"/>
</dbReference>
<dbReference type="HOGENOM" id="CLU_087560_0_0_4"/>
<dbReference type="OrthoDB" id="9787361at2"/>
<dbReference type="GO" id="GO:0042597">
    <property type="term" value="C:periplasmic space"/>
    <property type="evidence" value="ECO:0007669"/>
    <property type="project" value="UniProtKB-SubCell"/>
</dbReference>
<dbReference type="GO" id="GO:0044874">
    <property type="term" value="P:lipoprotein localization to outer membrane"/>
    <property type="evidence" value="ECO:0007669"/>
    <property type="project" value="UniProtKB-UniRule"/>
</dbReference>
<dbReference type="GO" id="GO:0042953">
    <property type="term" value="P:lipoprotein transport"/>
    <property type="evidence" value="ECO:0007669"/>
    <property type="project" value="InterPro"/>
</dbReference>
<dbReference type="CDD" id="cd16325">
    <property type="entry name" value="LolA"/>
    <property type="match status" value="1"/>
</dbReference>
<dbReference type="Gene3D" id="2.50.20.10">
    <property type="entry name" value="Lipoprotein localisation LolA/LolB/LppX"/>
    <property type="match status" value="1"/>
</dbReference>
<dbReference type="HAMAP" id="MF_00240">
    <property type="entry name" value="LolA"/>
    <property type="match status" value="1"/>
</dbReference>
<dbReference type="InterPro" id="IPR029046">
    <property type="entry name" value="LolA/LolB/LppX"/>
</dbReference>
<dbReference type="InterPro" id="IPR004564">
    <property type="entry name" value="OM_lipoprot_carrier_LolA-like"/>
</dbReference>
<dbReference type="InterPro" id="IPR018323">
    <property type="entry name" value="OM_lipoprot_carrier_LolA_Pbac"/>
</dbReference>
<dbReference type="NCBIfam" id="TIGR00547">
    <property type="entry name" value="lolA"/>
    <property type="match status" value="1"/>
</dbReference>
<dbReference type="PANTHER" id="PTHR35869">
    <property type="entry name" value="OUTER-MEMBRANE LIPOPROTEIN CARRIER PROTEIN"/>
    <property type="match status" value="1"/>
</dbReference>
<dbReference type="PANTHER" id="PTHR35869:SF1">
    <property type="entry name" value="OUTER-MEMBRANE LIPOPROTEIN CARRIER PROTEIN"/>
    <property type="match status" value="1"/>
</dbReference>
<dbReference type="Pfam" id="PF03548">
    <property type="entry name" value="LolA"/>
    <property type="match status" value="1"/>
</dbReference>
<dbReference type="SUPFAM" id="SSF89392">
    <property type="entry name" value="Prokaryotic lipoproteins and lipoprotein localization factors"/>
    <property type="match status" value="1"/>
</dbReference>
<protein>
    <recommendedName>
        <fullName evidence="1">Outer-membrane lipoprotein carrier protein</fullName>
    </recommendedName>
</protein>
<comment type="function">
    <text evidence="1">Participates in the translocation of lipoproteins from the inner membrane to the outer membrane. Only forms a complex with a lipoprotein if the residue after the N-terminal Cys is not an aspartate (The Asp acts as a targeting signal to indicate that the lipoprotein should stay in the inner membrane).</text>
</comment>
<comment type="subunit">
    <text evidence="1">Monomer.</text>
</comment>
<comment type="subcellular location">
    <subcellularLocation>
        <location evidence="1">Periplasm</location>
    </subcellularLocation>
</comment>
<comment type="similarity">
    <text evidence="1">Belongs to the LolA family.</text>
</comment>
<name>LOLA_DECAR</name>
<reference key="1">
    <citation type="journal article" date="2009" name="BMC Genomics">
        <title>Metabolic analysis of the soil microbe Dechloromonas aromatica str. RCB: indications of a surprisingly complex life-style and cryptic anaerobic pathways for aromatic degradation.</title>
        <authorList>
            <person name="Salinero K.K."/>
            <person name="Keller K."/>
            <person name="Feil W.S."/>
            <person name="Feil H."/>
            <person name="Trong S."/>
            <person name="Di Bartolo G."/>
            <person name="Lapidus A."/>
        </authorList>
    </citation>
    <scope>NUCLEOTIDE SEQUENCE [LARGE SCALE GENOMIC DNA]</scope>
    <source>
        <strain>RCB</strain>
    </source>
</reference>
<accession>Q47GI3</accession>
<organism>
    <name type="scientific">Dechloromonas aromatica (strain RCB)</name>
    <dbReference type="NCBI Taxonomy" id="159087"/>
    <lineage>
        <taxon>Bacteria</taxon>
        <taxon>Pseudomonadati</taxon>
        <taxon>Pseudomonadota</taxon>
        <taxon>Betaproteobacteria</taxon>
        <taxon>Rhodocyclales</taxon>
        <taxon>Azonexaceae</taxon>
        <taxon>Dechloromonas</taxon>
    </lineage>
</organism>